<gene>
    <name evidence="7" type="primary">Hrb27C</name>
    <name evidence="7" type="synonym">hrp48</name>
    <name evidence="7" type="synonym">Rbp7</name>
    <name evidence="7" type="ORF">CG10377</name>
</gene>
<organism evidence="8">
    <name type="scientific">Drosophila melanogaster</name>
    <name type="common">Fruit fly</name>
    <dbReference type="NCBI Taxonomy" id="7227"/>
    <lineage>
        <taxon>Eukaryota</taxon>
        <taxon>Metazoa</taxon>
        <taxon>Ecdysozoa</taxon>
        <taxon>Arthropoda</taxon>
        <taxon>Hexapoda</taxon>
        <taxon>Insecta</taxon>
        <taxon>Pterygota</taxon>
        <taxon>Neoptera</taxon>
        <taxon>Endopterygota</taxon>
        <taxon>Diptera</taxon>
        <taxon>Brachycera</taxon>
        <taxon>Muscomorpha</taxon>
        <taxon>Ephydroidea</taxon>
        <taxon>Drosophilidae</taxon>
        <taxon>Drosophila</taxon>
        <taxon>Sophophora</taxon>
    </lineage>
</organism>
<proteinExistence type="evidence at protein level"/>
<reference key="1">
    <citation type="journal article" date="1992" name="J. Cell Biol.">
        <title>Characterization of the major hnRNP proteins from Drosophila melanogaster.</title>
        <authorList>
            <person name="Matunis E.L."/>
            <person name="Matunis M.J."/>
            <person name="Dreyfuss G."/>
        </authorList>
    </citation>
    <scope>NUCLEOTIDE SEQUENCE [MRNA]</scope>
    <source>
        <strain>Canton-S</strain>
        <tissue>Embryo</tissue>
    </source>
</reference>
<reference key="2">
    <citation type="journal article" date="2005" name="Mol. Biol. Evol.">
        <title>Rapidly evolving genes of Drosophila: differing levels of selective pressure in testis, ovary, and head tissues between sibling species.</title>
        <authorList>
            <person name="Jagadeeshan S."/>
            <person name="Singh R.S."/>
        </authorList>
    </citation>
    <scope>NUCLEOTIDE SEQUENCE [MRNA]</scope>
    <source>
        <tissue>Ovary</tissue>
    </source>
</reference>
<reference key="3">
    <citation type="journal article" date="2000" name="Science">
        <title>The genome sequence of Drosophila melanogaster.</title>
        <authorList>
            <person name="Adams M.D."/>
            <person name="Celniker S.E."/>
            <person name="Holt R.A."/>
            <person name="Evans C.A."/>
            <person name="Gocayne J.D."/>
            <person name="Amanatides P.G."/>
            <person name="Scherer S.E."/>
            <person name="Li P.W."/>
            <person name="Hoskins R.A."/>
            <person name="Galle R.F."/>
            <person name="George R.A."/>
            <person name="Lewis S.E."/>
            <person name="Richards S."/>
            <person name="Ashburner M."/>
            <person name="Henderson S.N."/>
            <person name="Sutton G.G."/>
            <person name="Wortman J.R."/>
            <person name="Yandell M.D."/>
            <person name="Zhang Q."/>
            <person name="Chen L.X."/>
            <person name="Brandon R.C."/>
            <person name="Rogers Y.-H.C."/>
            <person name="Blazej R.G."/>
            <person name="Champe M."/>
            <person name="Pfeiffer B.D."/>
            <person name="Wan K.H."/>
            <person name="Doyle C."/>
            <person name="Baxter E.G."/>
            <person name="Helt G."/>
            <person name="Nelson C.R."/>
            <person name="Miklos G.L.G."/>
            <person name="Abril J.F."/>
            <person name="Agbayani A."/>
            <person name="An H.-J."/>
            <person name="Andrews-Pfannkoch C."/>
            <person name="Baldwin D."/>
            <person name="Ballew R.M."/>
            <person name="Basu A."/>
            <person name="Baxendale J."/>
            <person name="Bayraktaroglu L."/>
            <person name="Beasley E.M."/>
            <person name="Beeson K.Y."/>
            <person name="Benos P.V."/>
            <person name="Berman B.P."/>
            <person name="Bhandari D."/>
            <person name="Bolshakov S."/>
            <person name="Borkova D."/>
            <person name="Botchan M.R."/>
            <person name="Bouck J."/>
            <person name="Brokstein P."/>
            <person name="Brottier P."/>
            <person name="Burtis K.C."/>
            <person name="Busam D.A."/>
            <person name="Butler H."/>
            <person name="Cadieu E."/>
            <person name="Center A."/>
            <person name="Chandra I."/>
            <person name="Cherry J.M."/>
            <person name="Cawley S."/>
            <person name="Dahlke C."/>
            <person name="Davenport L.B."/>
            <person name="Davies P."/>
            <person name="de Pablos B."/>
            <person name="Delcher A."/>
            <person name="Deng Z."/>
            <person name="Mays A.D."/>
            <person name="Dew I."/>
            <person name="Dietz S.M."/>
            <person name="Dodson K."/>
            <person name="Doup L.E."/>
            <person name="Downes M."/>
            <person name="Dugan-Rocha S."/>
            <person name="Dunkov B.C."/>
            <person name="Dunn P."/>
            <person name="Durbin K.J."/>
            <person name="Evangelista C.C."/>
            <person name="Ferraz C."/>
            <person name="Ferriera S."/>
            <person name="Fleischmann W."/>
            <person name="Fosler C."/>
            <person name="Gabrielian A.E."/>
            <person name="Garg N.S."/>
            <person name="Gelbart W.M."/>
            <person name="Glasser K."/>
            <person name="Glodek A."/>
            <person name="Gong F."/>
            <person name="Gorrell J.H."/>
            <person name="Gu Z."/>
            <person name="Guan P."/>
            <person name="Harris M."/>
            <person name="Harris N.L."/>
            <person name="Harvey D.A."/>
            <person name="Heiman T.J."/>
            <person name="Hernandez J.R."/>
            <person name="Houck J."/>
            <person name="Hostin D."/>
            <person name="Houston K.A."/>
            <person name="Howland T.J."/>
            <person name="Wei M.-H."/>
            <person name="Ibegwam C."/>
            <person name="Jalali M."/>
            <person name="Kalush F."/>
            <person name="Karpen G.H."/>
            <person name="Ke Z."/>
            <person name="Kennison J.A."/>
            <person name="Ketchum K.A."/>
            <person name="Kimmel B.E."/>
            <person name="Kodira C.D."/>
            <person name="Kraft C.L."/>
            <person name="Kravitz S."/>
            <person name="Kulp D."/>
            <person name="Lai Z."/>
            <person name="Lasko P."/>
            <person name="Lei Y."/>
            <person name="Levitsky A.A."/>
            <person name="Li J.H."/>
            <person name="Li Z."/>
            <person name="Liang Y."/>
            <person name="Lin X."/>
            <person name="Liu X."/>
            <person name="Mattei B."/>
            <person name="McIntosh T.C."/>
            <person name="McLeod M.P."/>
            <person name="McPherson D."/>
            <person name="Merkulov G."/>
            <person name="Milshina N.V."/>
            <person name="Mobarry C."/>
            <person name="Morris J."/>
            <person name="Moshrefi A."/>
            <person name="Mount S.M."/>
            <person name="Moy M."/>
            <person name="Murphy B."/>
            <person name="Murphy L."/>
            <person name="Muzny D.M."/>
            <person name="Nelson D.L."/>
            <person name="Nelson D.R."/>
            <person name="Nelson K.A."/>
            <person name="Nixon K."/>
            <person name="Nusskern D.R."/>
            <person name="Pacleb J.M."/>
            <person name="Palazzolo M."/>
            <person name="Pittman G.S."/>
            <person name="Pan S."/>
            <person name="Pollard J."/>
            <person name="Puri V."/>
            <person name="Reese M.G."/>
            <person name="Reinert K."/>
            <person name="Remington K."/>
            <person name="Saunders R.D.C."/>
            <person name="Scheeler F."/>
            <person name="Shen H."/>
            <person name="Shue B.C."/>
            <person name="Siden-Kiamos I."/>
            <person name="Simpson M."/>
            <person name="Skupski M.P."/>
            <person name="Smith T.J."/>
            <person name="Spier E."/>
            <person name="Spradling A.C."/>
            <person name="Stapleton M."/>
            <person name="Strong R."/>
            <person name="Sun E."/>
            <person name="Svirskas R."/>
            <person name="Tector C."/>
            <person name="Turner R."/>
            <person name="Venter E."/>
            <person name="Wang A.H."/>
            <person name="Wang X."/>
            <person name="Wang Z.-Y."/>
            <person name="Wassarman D.A."/>
            <person name="Weinstock G.M."/>
            <person name="Weissenbach J."/>
            <person name="Williams S.M."/>
            <person name="Woodage T."/>
            <person name="Worley K.C."/>
            <person name="Wu D."/>
            <person name="Yang S."/>
            <person name="Yao Q.A."/>
            <person name="Ye J."/>
            <person name="Yeh R.-F."/>
            <person name="Zaveri J.S."/>
            <person name="Zhan M."/>
            <person name="Zhang G."/>
            <person name="Zhao Q."/>
            <person name="Zheng L."/>
            <person name="Zheng X.H."/>
            <person name="Zhong F.N."/>
            <person name="Zhong W."/>
            <person name="Zhou X."/>
            <person name="Zhu S.C."/>
            <person name="Zhu X."/>
            <person name="Smith H.O."/>
            <person name="Gibbs R.A."/>
            <person name="Myers E.W."/>
            <person name="Rubin G.M."/>
            <person name="Venter J.C."/>
        </authorList>
    </citation>
    <scope>NUCLEOTIDE SEQUENCE [LARGE SCALE GENOMIC DNA]</scope>
    <source>
        <strain>Berkeley</strain>
    </source>
</reference>
<reference key="4">
    <citation type="journal article" date="2002" name="Genome Biol.">
        <title>Annotation of the Drosophila melanogaster euchromatic genome: a systematic review.</title>
        <authorList>
            <person name="Misra S."/>
            <person name="Crosby M.A."/>
            <person name="Mungall C.J."/>
            <person name="Matthews B.B."/>
            <person name="Campbell K.S."/>
            <person name="Hradecky P."/>
            <person name="Huang Y."/>
            <person name="Kaminker J.S."/>
            <person name="Millburn G.H."/>
            <person name="Prochnik S.E."/>
            <person name="Smith C.D."/>
            <person name="Tupy J.L."/>
            <person name="Whitfield E.J."/>
            <person name="Bayraktaroglu L."/>
            <person name="Berman B.P."/>
            <person name="Bettencourt B.R."/>
            <person name="Celniker S.E."/>
            <person name="de Grey A.D.N.J."/>
            <person name="Drysdale R.A."/>
            <person name="Harris N.L."/>
            <person name="Richter J."/>
            <person name="Russo S."/>
            <person name="Schroeder A.J."/>
            <person name="Shu S.Q."/>
            <person name="Stapleton M."/>
            <person name="Yamada C."/>
            <person name="Ashburner M."/>
            <person name="Gelbart W.M."/>
            <person name="Rubin G.M."/>
            <person name="Lewis S.E."/>
        </authorList>
    </citation>
    <scope>GENOME REANNOTATION</scope>
    <source>
        <strain>Berkeley</strain>
    </source>
</reference>
<reference key="5">
    <citation type="journal article" date="2002" name="Genome Biol.">
        <title>A Drosophila full-length cDNA resource.</title>
        <authorList>
            <person name="Stapleton M."/>
            <person name="Carlson J.W."/>
            <person name="Brokstein P."/>
            <person name="Yu C."/>
            <person name="Champe M."/>
            <person name="George R.A."/>
            <person name="Guarin H."/>
            <person name="Kronmiller B."/>
            <person name="Pacleb J.M."/>
            <person name="Park S."/>
            <person name="Wan K.H."/>
            <person name="Rubin G.M."/>
            <person name="Celniker S.E."/>
        </authorList>
    </citation>
    <scope>NUCLEOTIDE SEQUENCE [LARGE SCALE MRNA]</scope>
    <source>
        <strain>Berkeley</strain>
        <tissue>Embryo</tissue>
        <tissue>Head</tissue>
    </source>
</reference>
<reference key="6">
    <citation type="journal article" date="1993" name="Mol. Cell. Biol.">
        <title>Isolation of RRM-type RNA-binding protein genes and the analysis of their relatedness by using a numerical approach.</title>
        <authorList>
            <person name="Kim Y.-J."/>
            <person name="Baker B.S."/>
        </authorList>
    </citation>
    <scope>NUCLEOTIDE SEQUENCE [MRNA] OF 10-53</scope>
</reference>
<reference key="7">
    <citation type="journal article" date="1997" name="Mol. Cell. Biol.">
        <title>Mutations in the hrp48 gene, which encodes a Drosophila heterogeneous nuclear ribonucleoprotein particle protein, cause lethality and developmental defects and affect P-element third-intron splicing in vivo.</title>
        <authorList>
            <person name="Hammond L.E."/>
            <person name="Rudner D.Z."/>
            <person name="Kanaar R."/>
            <person name="Rio D.C."/>
        </authorList>
    </citation>
    <scope>FUNCTION</scope>
    <scope>DISRUPTION PHENOTYPE</scope>
</reference>
<reference key="8">
    <citation type="journal article" date="2004" name="Development">
        <title>Hrb27C, Sqd and Otu cooperatively regulate gurken RNA localization and mediate nurse cell chromosome dispersion in Drosophila oogenesis.</title>
        <authorList>
            <person name="Goodrich J.S."/>
            <person name="Clouse K.N."/>
            <person name="Schuepbach T."/>
        </authorList>
    </citation>
    <scope>FUNCTION</scope>
    <scope>INTERACTION WITH OTU; SQD AND GRK MRNA</scope>
</reference>
<reference key="9">
    <citation type="journal article" date="2008" name="J. Proteome Res.">
        <title>Phosphoproteome analysis of Drosophila melanogaster embryos.</title>
        <authorList>
            <person name="Zhai B."/>
            <person name="Villen J."/>
            <person name="Beausoleil S.A."/>
            <person name="Mintseris J."/>
            <person name="Gygi S.P."/>
        </authorList>
    </citation>
    <scope>PHOSPHORYLATION [LARGE SCALE ANALYSIS] AT SER-177; SER-366; SER-368; SER-370; TYR-372 AND SER-379</scope>
    <scope>IDENTIFICATION BY MASS SPECTROMETRY</scope>
    <source>
        <tissue>Embryo</tissue>
    </source>
</reference>
<dbReference type="EMBL" id="X62639">
    <property type="protein sequence ID" value="CAA44505.1"/>
    <property type="molecule type" value="mRNA"/>
</dbReference>
<dbReference type="EMBL" id="DQ062784">
    <property type="protein sequence ID" value="AAY56657.1"/>
    <property type="molecule type" value="mRNA"/>
</dbReference>
<dbReference type="EMBL" id="AE014134">
    <property type="protein sequence ID" value="AAF52456.1"/>
    <property type="molecule type" value="Genomic_DNA"/>
</dbReference>
<dbReference type="EMBL" id="AE014134">
    <property type="protein sequence ID" value="AAF52457.1"/>
    <property type="molecule type" value="Genomic_DNA"/>
</dbReference>
<dbReference type="EMBL" id="AE014134">
    <property type="protein sequence ID" value="AAN10605.1"/>
    <property type="molecule type" value="Genomic_DNA"/>
</dbReference>
<dbReference type="EMBL" id="AY069699">
    <property type="protein sequence ID" value="AAL39844.1"/>
    <property type="molecule type" value="mRNA"/>
</dbReference>
<dbReference type="EMBL" id="AY128430">
    <property type="protein sequence ID" value="AAM75023.1"/>
    <property type="molecule type" value="mRNA"/>
</dbReference>
<dbReference type="EMBL" id="S51720">
    <property type="protein sequence ID" value="AAB24628.1"/>
    <property type="molecule type" value="mRNA"/>
</dbReference>
<dbReference type="PIR" id="D41732">
    <property type="entry name" value="D41732"/>
</dbReference>
<dbReference type="RefSeq" id="NP_001162897.1">
    <property type="nucleotide sequence ID" value="NM_001169426.2"/>
</dbReference>
<dbReference type="RefSeq" id="NP_001162898.1">
    <property type="nucleotide sequence ID" value="NM_001169427.2"/>
</dbReference>
<dbReference type="RefSeq" id="NP_001245917.1">
    <property type="nucleotide sequence ID" value="NM_001258988.2"/>
</dbReference>
<dbReference type="RefSeq" id="NP_001245918.1">
    <property type="nucleotide sequence ID" value="NM_001258989.2"/>
</dbReference>
<dbReference type="RefSeq" id="NP_001245919.1">
    <property type="nucleotide sequence ID" value="NM_001258990.2"/>
</dbReference>
<dbReference type="RefSeq" id="NP_476869.1">
    <property type="nucleotide sequence ID" value="NM_057521.6"/>
</dbReference>
<dbReference type="RefSeq" id="NP_723228.1">
    <property type="nucleotide sequence ID" value="NM_164720.4"/>
</dbReference>
<dbReference type="RefSeq" id="NP_723229.1">
    <property type="nucleotide sequence ID" value="NM_164721.3"/>
</dbReference>
<dbReference type="PDB" id="9EN7">
    <property type="method" value="X-ray"/>
    <property type="resolution" value="1.19 A"/>
    <property type="chains" value="A=1-88"/>
</dbReference>
<dbReference type="PDBsum" id="9EN7"/>
<dbReference type="SMR" id="P48809"/>
<dbReference type="BioGRID" id="60119">
    <property type="interactions" value="52"/>
</dbReference>
<dbReference type="FunCoup" id="P48809">
    <property type="interactions" value="2106"/>
</dbReference>
<dbReference type="IntAct" id="P48809">
    <property type="interactions" value="13"/>
</dbReference>
<dbReference type="STRING" id="7227.FBpp0297875"/>
<dbReference type="GlyGen" id="P48809">
    <property type="glycosylation" value="1 site"/>
</dbReference>
<dbReference type="iPTMnet" id="P48809"/>
<dbReference type="PaxDb" id="7227-FBpp0297875"/>
<dbReference type="DNASU" id="33968"/>
<dbReference type="EnsemblMetazoa" id="FBtr0079346">
    <property type="protein sequence ID" value="FBpp0078974"/>
    <property type="gene ID" value="FBgn0004838"/>
</dbReference>
<dbReference type="EnsemblMetazoa" id="FBtr0079347">
    <property type="protein sequence ID" value="FBpp0078975"/>
    <property type="gene ID" value="FBgn0004838"/>
</dbReference>
<dbReference type="EnsemblMetazoa" id="FBtr0079348">
    <property type="protein sequence ID" value="FBpp0078976"/>
    <property type="gene ID" value="FBgn0004838"/>
</dbReference>
<dbReference type="EnsemblMetazoa" id="FBtr0301403">
    <property type="protein sequence ID" value="FBpp0290617"/>
    <property type="gene ID" value="FBgn0004838"/>
</dbReference>
<dbReference type="EnsemblMetazoa" id="FBtr0301404">
    <property type="protein sequence ID" value="FBpp0290618"/>
    <property type="gene ID" value="FBgn0004838"/>
</dbReference>
<dbReference type="EnsemblMetazoa" id="FBtr0307030">
    <property type="protein sequence ID" value="FBpp0297873"/>
    <property type="gene ID" value="FBgn0004838"/>
</dbReference>
<dbReference type="EnsemblMetazoa" id="FBtr0307031">
    <property type="protein sequence ID" value="FBpp0297874"/>
    <property type="gene ID" value="FBgn0004838"/>
</dbReference>
<dbReference type="EnsemblMetazoa" id="FBtr0307032">
    <property type="protein sequence ID" value="FBpp0297875"/>
    <property type="gene ID" value="FBgn0004838"/>
</dbReference>
<dbReference type="GeneID" id="33968"/>
<dbReference type="KEGG" id="dme:Dmel_CG10377"/>
<dbReference type="UCSC" id="CG10377-RB">
    <property type="organism name" value="d. melanogaster"/>
</dbReference>
<dbReference type="AGR" id="FB:FBgn0004838"/>
<dbReference type="CTD" id="33968"/>
<dbReference type="FlyBase" id="FBgn0004838">
    <property type="gene designation" value="Hrb27C"/>
</dbReference>
<dbReference type="VEuPathDB" id="VectorBase:FBgn0004838"/>
<dbReference type="eggNOG" id="KOG4205">
    <property type="taxonomic scope" value="Eukaryota"/>
</dbReference>
<dbReference type="GeneTree" id="ENSGT00940000156757"/>
<dbReference type="HOGENOM" id="CLU_012062_1_2_1"/>
<dbReference type="InParanoid" id="P48809"/>
<dbReference type="OMA" id="PCNPRSQ"/>
<dbReference type="OrthoDB" id="1875751at2759"/>
<dbReference type="PhylomeDB" id="P48809"/>
<dbReference type="SignaLink" id="P48809"/>
<dbReference type="BioGRID-ORCS" id="33968">
    <property type="hits" value="1 hit in 3 CRISPR screens"/>
</dbReference>
<dbReference type="CD-CODE" id="19A54EA0">
    <property type="entry name" value="Sponge body"/>
</dbReference>
<dbReference type="ChiTaRS" id="Hrb27C">
    <property type="organism name" value="fly"/>
</dbReference>
<dbReference type="GenomeRNAi" id="33968"/>
<dbReference type="PRO" id="PR:P48809"/>
<dbReference type="Proteomes" id="UP000000803">
    <property type="component" value="Chromosome 2L"/>
</dbReference>
<dbReference type="Bgee" id="FBgn0004838">
    <property type="expression patterns" value="Expressed in spermatogonium in testis and 286 other cell types or tissues"/>
</dbReference>
<dbReference type="ExpressionAtlas" id="P48809">
    <property type="expression patterns" value="baseline and differential"/>
</dbReference>
<dbReference type="GO" id="GO:0005737">
    <property type="term" value="C:cytoplasm"/>
    <property type="evidence" value="ECO:0000314"/>
    <property type="project" value="FlyBase"/>
</dbReference>
<dbReference type="GO" id="GO:0005654">
    <property type="term" value="C:nucleoplasm"/>
    <property type="evidence" value="ECO:0000314"/>
    <property type="project" value="FlyBase"/>
</dbReference>
<dbReference type="GO" id="GO:0005634">
    <property type="term" value="C:nucleus"/>
    <property type="evidence" value="ECO:0007005"/>
    <property type="project" value="FlyBase"/>
</dbReference>
<dbReference type="GO" id="GO:0043186">
    <property type="term" value="C:P granule"/>
    <property type="evidence" value="ECO:0000353"/>
    <property type="project" value="FlyBase"/>
</dbReference>
<dbReference type="GO" id="GO:0032991">
    <property type="term" value="C:protein-containing complex"/>
    <property type="evidence" value="ECO:0000353"/>
    <property type="project" value="FlyBase"/>
</dbReference>
<dbReference type="GO" id="GO:1990904">
    <property type="term" value="C:ribonucleoprotein complex"/>
    <property type="evidence" value="ECO:0000314"/>
    <property type="project" value="FlyBase"/>
</dbReference>
<dbReference type="GO" id="GO:0003730">
    <property type="term" value="F:mRNA 3'-UTR binding"/>
    <property type="evidence" value="ECO:0000314"/>
    <property type="project" value="FlyBase"/>
</dbReference>
<dbReference type="GO" id="GO:0048027">
    <property type="term" value="F:mRNA 5'-UTR binding"/>
    <property type="evidence" value="ECO:0000304"/>
    <property type="project" value="FlyBase"/>
</dbReference>
<dbReference type="GO" id="GO:0003729">
    <property type="term" value="F:mRNA binding"/>
    <property type="evidence" value="ECO:0000250"/>
    <property type="project" value="FlyBase"/>
</dbReference>
<dbReference type="GO" id="GO:0034046">
    <property type="term" value="F:poly(G) binding"/>
    <property type="evidence" value="ECO:0000318"/>
    <property type="project" value="GO_Central"/>
</dbReference>
<dbReference type="GO" id="GO:0003697">
    <property type="term" value="F:single-stranded DNA binding"/>
    <property type="evidence" value="ECO:0000314"/>
    <property type="project" value="FlyBase"/>
</dbReference>
<dbReference type="GO" id="GO:0030371">
    <property type="term" value="F:translation repressor activity"/>
    <property type="evidence" value="ECO:0000315"/>
    <property type="project" value="CACAO"/>
</dbReference>
<dbReference type="GO" id="GO:0007319">
    <property type="term" value="P:negative regulation of oskar mRNA translation"/>
    <property type="evidence" value="ECO:0000304"/>
    <property type="project" value="FlyBase"/>
</dbReference>
<dbReference type="GO" id="GO:0045451">
    <property type="term" value="P:pole plasm oskar mRNA localization"/>
    <property type="evidence" value="ECO:0000315"/>
    <property type="project" value="FlyBase"/>
</dbReference>
<dbReference type="GO" id="GO:1903688">
    <property type="term" value="P:positive regulation of border follicle cell migration"/>
    <property type="evidence" value="ECO:0000315"/>
    <property type="project" value="FlyBase"/>
</dbReference>
<dbReference type="GO" id="GO:0048026">
    <property type="term" value="P:positive regulation of mRNA splicing, via spliceosome"/>
    <property type="evidence" value="ECO:0000318"/>
    <property type="project" value="GO_Central"/>
</dbReference>
<dbReference type="GO" id="GO:0045727">
    <property type="term" value="P:positive regulation of translation"/>
    <property type="evidence" value="ECO:0000314"/>
    <property type="project" value="FlyBase"/>
</dbReference>
<dbReference type="GO" id="GO:0048024">
    <property type="term" value="P:regulation of mRNA splicing, via spliceosome"/>
    <property type="evidence" value="ECO:0000315"/>
    <property type="project" value="FlyBase"/>
</dbReference>
<dbReference type="GO" id="GO:0007283">
    <property type="term" value="P:spermatogenesis"/>
    <property type="evidence" value="ECO:0000318"/>
    <property type="project" value="GO_Central"/>
</dbReference>
<dbReference type="CDD" id="cd12325">
    <property type="entry name" value="RRM1_hnRNPA_hnRNPD_like"/>
    <property type="match status" value="1"/>
</dbReference>
<dbReference type="CDD" id="cd12327">
    <property type="entry name" value="RRM2_DAZAP1"/>
    <property type="match status" value="1"/>
</dbReference>
<dbReference type="FunFam" id="3.30.70.330:FF:000427">
    <property type="entry name" value="Heterogeneous nuclear ribonucleoprotein 27C"/>
    <property type="match status" value="1"/>
</dbReference>
<dbReference type="Gene3D" id="3.30.70.330">
    <property type="match status" value="2"/>
</dbReference>
<dbReference type="InterPro" id="IPR034131">
    <property type="entry name" value="DAZAP1_RRM2"/>
</dbReference>
<dbReference type="InterPro" id="IPR012677">
    <property type="entry name" value="Nucleotide-bd_a/b_plait_sf"/>
</dbReference>
<dbReference type="InterPro" id="IPR035979">
    <property type="entry name" value="RBD_domain_sf"/>
</dbReference>
<dbReference type="InterPro" id="IPR000504">
    <property type="entry name" value="RRM_dom"/>
</dbReference>
<dbReference type="PANTHER" id="PTHR48032">
    <property type="entry name" value="RNA-BINDING PROTEIN MUSASHI HOMOLOG RBP6"/>
    <property type="match status" value="1"/>
</dbReference>
<dbReference type="PANTHER" id="PTHR48032:SF18">
    <property type="entry name" value="RRM DOMAIN-CONTAINING PROTEIN"/>
    <property type="match status" value="1"/>
</dbReference>
<dbReference type="Pfam" id="PF00076">
    <property type="entry name" value="RRM_1"/>
    <property type="match status" value="2"/>
</dbReference>
<dbReference type="SMART" id="SM00360">
    <property type="entry name" value="RRM"/>
    <property type="match status" value="2"/>
</dbReference>
<dbReference type="SUPFAM" id="SSF54928">
    <property type="entry name" value="RNA-binding domain, RBD"/>
    <property type="match status" value="2"/>
</dbReference>
<dbReference type="PROSITE" id="PS50102">
    <property type="entry name" value="RRM"/>
    <property type="match status" value="2"/>
</dbReference>
<feature type="chain" id="PRO_0000081748" description="Heterogeneous nuclear ribonucleoprotein 27C">
    <location>
        <begin position="1"/>
        <end position="421"/>
    </location>
</feature>
<feature type="domain" description="RRM 1" evidence="1">
    <location>
        <begin position="7"/>
        <end position="88"/>
    </location>
</feature>
<feature type="domain" description="RRM 2" evidence="1">
    <location>
        <begin position="96"/>
        <end position="173"/>
    </location>
</feature>
<feature type="region of interest" description="Disordered" evidence="2">
    <location>
        <begin position="171"/>
        <end position="191"/>
    </location>
</feature>
<feature type="region of interest" description="Disordered" evidence="2">
    <location>
        <begin position="240"/>
        <end position="373"/>
    </location>
</feature>
<feature type="region of interest" description="Disordered" evidence="2">
    <location>
        <begin position="392"/>
        <end position="421"/>
    </location>
</feature>
<feature type="compositionally biased region" description="Polar residues" evidence="2">
    <location>
        <begin position="240"/>
        <end position="250"/>
    </location>
</feature>
<feature type="compositionally biased region" description="Pro residues" evidence="2">
    <location>
        <begin position="264"/>
        <end position="273"/>
    </location>
</feature>
<feature type="compositionally biased region" description="Polar residues" evidence="2">
    <location>
        <begin position="275"/>
        <end position="284"/>
    </location>
</feature>
<feature type="compositionally biased region" description="Low complexity" evidence="2">
    <location>
        <begin position="293"/>
        <end position="302"/>
    </location>
</feature>
<feature type="compositionally biased region" description="Polar residues" evidence="2">
    <location>
        <begin position="406"/>
        <end position="421"/>
    </location>
</feature>
<feature type="modified residue" description="Phosphoserine" evidence="4">
    <location>
        <position position="177"/>
    </location>
</feature>
<feature type="modified residue" description="Phosphoserine" evidence="4">
    <location>
        <position position="366"/>
    </location>
</feature>
<feature type="modified residue" description="Phosphoserine" evidence="4">
    <location>
        <position position="368"/>
    </location>
</feature>
<feature type="modified residue" description="Phosphoserine" evidence="4">
    <location>
        <position position="370"/>
    </location>
</feature>
<feature type="modified residue" description="Phosphotyrosine" evidence="4">
    <location>
        <position position="372"/>
    </location>
</feature>
<feature type="modified residue" description="Phosphoserine" evidence="4">
    <location>
        <position position="379"/>
    </location>
</feature>
<feature type="sequence conflict" description="In Ref. 1; CAA44505." evidence="6" ref="1">
    <location>
        <begin position="262"/>
        <end position="297"/>
    </location>
</feature>
<feature type="strand" evidence="9">
    <location>
        <begin position="8"/>
        <end position="12"/>
    </location>
</feature>
<feature type="helix" evidence="9">
    <location>
        <begin position="20"/>
        <end position="27"/>
    </location>
</feature>
<feature type="helix" evidence="9">
    <location>
        <begin position="28"/>
        <end position="30"/>
    </location>
</feature>
<feature type="strand" evidence="9">
    <location>
        <begin position="33"/>
        <end position="40"/>
    </location>
</feature>
<feature type="turn" evidence="9">
    <location>
        <begin position="42"/>
        <end position="44"/>
    </location>
</feature>
<feature type="strand" evidence="9">
    <location>
        <begin position="47"/>
        <end position="57"/>
    </location>
</feature>
<feature type="helix" evidence="9">
    <location>
        <begin position="60"/>
        <end position="66"/>
    </location>
</feature>
<feature type="strand" evidence="9">
    <location>
        <begin position="70"/>
        <end position="72"/>
    </location>
</feature>
<feature type="strand" evidence="9">
    <location>
        <begin position="75"/>
        <end position="81"/>
    </location>
</feature>
<accession>P48809</accession>
<accession>A4V0B8</accession>
<accession>Q7JPT5</accession>
<accession>Q9TY67</accession>
<accession>Q9VM68</accession>
<protein>
    <recommendedName>
        <fullName evidence="6">Heterogeneous nuclear ribonucleoprotein 27C</fullName>
        <shortName>Hrb27-C</shortName>
    </recommendedName>
    <alternativeName>
        <fullName>HRP48.1</fullName>
    </alternativeName>
    <alternativeName>
        <fullName>hnRNP 48</fullName>
    </alternativeName>
</protein>
<sequence>MEEDERGKLFVGGLSWETTQENLSRYFCRFGDIIDCVVMKNNESGRSRGFGFVTFADPTNVNHVLQNGPHTLDGRTIDPKPCNPRTLQKPKKGGGYKVFLGGLPSNVTETDLRTFFNRYGKVTEVVIMYDQEKKKSRGFGFLSFEEESSVEHVTNERYINLNGKQVEIKKAEPRDGSGGQNSNNSTVGGAYGKLGNECSHWGPHHAPINMMQGQNGQMGGPPLNMPIGAPNMMPGYQGWGTSPQQQQYGYGNSGPGSYQGWGAPPGPQGPPPQWSNYAGPQQTQGYGGYDMYNSTSTGAPSGPSGGGSWNSWNMPPNSAGPTGAPGAGAGTATDMYSRAQAWATGGPSTTGPVGGMPRTGPGNSASKSGSEYDYGGYGSGYDYDYSNYVKQEGASNYGAGPRSAYGNDSSTQPPYATSQAV</sequence>
<keyword id="KW-0002">3D-structure</keyword>
<keyword id="KW-0963">Cytoplasm</keyword>
<keyword id="KW-0539">Nucleus</keyword>
<keyword id="KW-0597">Phosphoprotein</keyword>
<keyword id="KW-1185">Reference proteome</keyword>
<keyword id="KW-0677">Repeat</keyword>
<keyword id="KW-0687">Ribonucleoprotein</keyword>
<keyword id="KW-0694">RNA-binding</keyword>
<name>RB27C_DROME</name>
<evidence type="ECO:0000255" key="1">
    <source>
        <dbReference type="PROSITE-ProRule" id="PRU00176"/>
    </source>
</evidence>
<evidence type="ECO:0000256" key="2">
    <source>
        <dbReference type="SAM" id="MobiDB-lite"/>
    </source>
</evidence>
<evidence type="ECO:0000269" key="3">
    <source>
    </source>
</evidence>
<evidence type="ECO:0000269" key="4">
    <source>
    </source>
</evidence>
<evidence type="ECO:0000269" key="5">
    <source>
    </source>
</evidence>
<evidence type="ECO:0000305" key="6"/>
<evidence type="ECO:0000312" key="7">
    <source>
        <dbReference type="FlyBase" id="FBgn0004838"/>
    </source>
</evidence>
<evidence type="ECO:0000312" key="8">
    <source>
        <dbReference type="Proteomes" id="UP000000803"/>
    </source>
</evidence>
<evidence type="ECO:0007829" key="9">
    <source>
        <dbReference type="PDB" id="9EN7"/>
    </source>
</evidence>
<comment type="function">
    <text evidence="3 5">This protein is a component of ribonucleosomes. Could be needed to organize a concentration gradient of a dorsalizing morphogen (Dm) originating in the germinal vesicle. Interacts with grk mRNA (via 3' UTR) and involved in its localization to the dorsal anterior region of the oocyte during dorsal-ventral axis determination; may function as a ribonuclear protein complex together with sqd and otu (PubMed:15056611). Required for polytene chromosome dispersal in nurse cells during oogenesis (PubMed:15056611). May be involved in the regulation of splicing (PubMed:9372958).</text>
</comment>
<comment type="subunit">
    <text evidence="3">Interacts with sqd; the interaction is RNA-dependent and may be specific for sqd isoform A/sqdA (PubMed:15056611). Interacts with otu; the interaction is RNA-independent (PubMed:15056611).</text>
</comment>
<comment type="subcellular location">
    <subcellularLocation>
        <location>Nucleus</location>
    </subcellularLocation>
    <subcellularLocation>
        <location>Cytoplasm</location>
    </subcellularLocation>
    <text>Nuclear and/or cytoplasmic.</text>
</comment>
<comment type="disruption phenotype">
    <text evidence="5">Lethal due to developmental defects.</text>
</comment>